<sequence>MLLELARWLQQLESLFGLFNYLTFRGILAALTALFLSLWMGPAVIRKLAQFKGGQPIRQDGPQTHFSKAGTPTMGGSLILLTVTLSVLLWGDLRNRYVWLVLAVMICFGAIGWYDDWIKIVRRDPNGLKSRWKYLLQSIFGLAAGLFLYYTADVPAAITFYIPMFKAIALPLAGVSFVVIAYFWIVGFSNAVNLTDGLDGLAIMPTVLVACALGVFAYASGNVVFAEYLKIPLIPGAGELIIICSAIAGAGLGFLWFNTYPAMVFMGDIGALSLGAVLGTVAVIVRQELVLVIMGGVFVIETLSVMIQVASFKLTGKRVFRMAPIHHHFELKGWPEPRVIVRFWIISVVLVLIGLATLKVR</sequence>
<dbReference type="EC" id="2.7.8.13" evidence="1"/>
<dbReference type="EMBL" id="CP000050">
    <property type="protein sequence ID" value="AAY50555.1"/>
    <property type="molecule type" value="Genomic_DNA"/>
</dbReference>
<dbReference type="RefSeq" id="WP_011035960.1">
    <property type="nucleotide sequence ID" value="NZ_CP155948.1"/>
</dbReference>
<dbReference type="SMR" id="Q4UQW8"/>
<dbReference type="GeneID" id="58014710"/>
<dbReference type="KEGG" id="xcb:XC_3512"/>
<dbReference type="HOGENOM" id="CLU_023982_0_0_6"/>
<dbReference type="UniPathway" id="UPA00219"/>
<dbReference type="Proteomes" id="UP000000420">
    <property type="component" value="Chromosome"/>
</dbReference>
<dbReference type="GO" id="GO:0005886">
    <property type="term" value="C:plasma membrane"/>
    <property type="evidence" value="ECO:0007669"/>
    <property type="project" value="UniProtKB-SubCell"/>
</dbReference>
<dbReference type="GO" id="GO:0046872">
    <property type="term" value="F:metal ion binding"/>
    <property type="evidence" value="ECO:0007669"/>
    <property type="project" value="UniProtKB-KW"/>
</dbReference>
<dbReference type="GO" id="GO:0008963">
    <property type="term" value="F:phospho-N-acetylmuramoyl-pentapeptide-transferase activity"/>
    <property type="evidence" value="ECO:0007669"/>
    <property type="project" value="UniProtKB-UniRule"/>
</dbReference>
<dbReference type="GO" id="GO:0051992">
    <property type="term" value="F:UDP-N-acetylmuramoyl-L-alanyl-D-glutamyl-meso-2,6-diaminopimelyl-D-alanyl-D-alanine:undecaprenyl-phosphate transferase activity"/>
    <property type="evidence" value="ECO:0007669"/>
    <property type="project" value="RHEA"/>
</dbReference>
<dbReference type="GO" id="GO:0051301">
    <property type="term" value="P:cell division"/>
    <property type="evidence" value="ECO:0007669"/>
    <property type="project" value="UniProtKB-KW"/>
</dbReference>
<dbReference type="GO" id="GO:0071555">
    <property type="term" value="P:cell wall organization"/>
    <property type="evidence" value="ECO:0007669"/>
    <property type="project" value="UniProtKB-KW"/>
</dbReference>
<dbReference type="GO" id="GO:0009252">
    <property type="term" value="P:peptidoglycan biosynthetic process"/>
    <property type="evidence" value="ECO:0007669"/>
    <property type="project" value="UniProtKB-UniRule"/>
</dbReference>
<dbReference type="GO" id="GO:0008360">
    <property type="term" value="P:regulation of cell shape"/>
    <property type="evidence" value="ECO:0007669"/>
    <property type="project" value="UniProtKB-KW"/>
</dbReference>
<dbReference type="CDD" id="cd06852">
    <property type="entry name" value="GT_MraY"/>
    <property type="match status" value="1"/>
</dbReference>
<dbReference type="HAMAP" id="MF_00038">
    <property type="entry name" value="MraY"/>
    <property type="match status" value="1"/>
</dbReference>
<dbReference type="InterPro" id="IPR000715">
    <property type="entry name" value="Glycosyl_transferase_4"/>
</dbReference>
<dbReference type="InterPro" id="IPR003524">
    <property type="entry name" value="PNAcMuramoyl-5peptid_Trfase"/>
</dbReference>
<dbReference type="InterPro" id="IPR018480">
    <property type="entry name" value="PNAcMuramoyl-5peptid_Trfase_CS"/>
</dbReference>
<dbReference type="NCBIfam" id="TIGR00445">
    <property type="entry name" value="mraY"/>
    <property type="match status" value="1"/>
</dbReference>
<dbReference type="PANTHER" id="PTHR22926">
    <property type="entry name" value="PHOSPHO-N-ACETYLMURAMOYL-PENTAPEPTIDE-TRANSFERASE"/>
    <property type="match status" value="1"/>
</dbReference>
<dbReference type="PANTHER" id="PTHR22926:SF5">
    <property type="entry name" value="PHOSPHO-N-ACETYLMURAMOYL-PENTAPEPTIDE-TRANSFERASE HOMOLOG"/>
    <property type="match status" value="1"/>
</dbReference>
<dbReference type="Pfam" id="PF00953">
    <property type="entry name" value="Glycos_transf_4"/>
    <property type="match status" value="1"/>
</dbReference>
<dbReference type="PROSITE" id="PS01347">
    <property type="entry name" value="MRAY_1"/>
    <property type="match status" value="1"/>
</dbReference>
<dbReference type="PROSITE" id="PS01348">
    <property type="entry name" value="MRAY_2"/>
    <property type="match status" value="1"/>
</dbReference>
<proteinExistence type="inferred from homology"/>
<gene>
    <name evidence="1" type="primary">mraY</name>
    <name type="ordered locus">XC_3512</name>
</gene>
<accession>Q4UQW8</accession>
<organism>
    <name type="scientific">Xanthomonas campestris pv. campestris (strain 8004)</name>
    <dbReference type="NCBI Taxonomy" id="314565"/>
    <lineage>
        <taxon>Bacteria</taxon>
        <taxon>Pseudomonadati</taxon>
        <taxon>Pseudomonadota</taxon>
        <taxon>Gammaproteobacteria</taxon>
        <taxon>Lysobacterales</taxon>
        <taxon>Lysobacteraceae</taxon>
        <taxon>Xanthomonas</taxon>
    </lineage>
</organism>
<feature type="chain" id="PRO_0000235501" description="Phospho-N-acetylmuramoyl-pentapeptide-transferase">
    <location>
        <begin position="1"/>
        <end position="361"/>
    </location>
</feature>
<feature type="transmembrane region" description="Helical" evidence="1">
    <location>
        <begin position="25"/>
        <end position="45"/>
    </location>
</feature>
<feature type="transmembrane region" description="Helical" evidence="1">
    <location>
        <begin position="73"/>
        <end position="93"/>
    </location>
</feature>
<feature type="transmembrane region" description="Helical" evidence="1">
    <location>
        <begin position="98"/>
        <end position="118"/>
    </location>
</feature>
<feature type="transmembrane region" description="Helical" evidence="1">
    <location>
        <begin position="139"/>
        <end position="159"/>
    </location>
</feature>
<feature type="transmembrane region" description="Helical" evidence="1">
    <location>
        <begin position="168"/>
        <end position="188"/>
    </location>
</feature>
<feature type="transmembrane region" description="Helical" evidence="1">
    <location>
        <begin position="200"/>
        <end position="220"/>
    </location>
</feature>
<feature type="transmembrane region" description="Helical" evidence="1">
    <location>
        <begin position="237"/>
        <end position="257"/>
    </location>
</feature>
<feature type="transmembrane region" description="Helical" evidence="1">
    <location>
        <begin position="264"/>
        <end position="284"/>
    </location>
</feature>
<feature type="transmembrane region" description="Helical" evidence="1">
    <location>
        <begin position="289"/>
        <end position="309"/>
    </location>
</feature>
<feature type="transmembrane region" description="Helical" evidence="1">
    <location>
        <begin position="339"/>
        <end position="359"/>
    </location>
</feature>
<reference key="1">
    <citation type="journal article" date="2005" name="Genome Res.">
        <title>Comparative and functional genomic analyses of the pathogenicity of phytopathogen Xanthomonas campestris pv. campestris.</title>
        <authorList>
            <person name="Qian W."/>
            <person name="Jia Y."/>
            <person name="Ren S.-X."/>
            <person name="He Y.-Q."/>
            <person name="Feng J.-X."/>
            <person name="Lu L.-F."/>
            <person name="Sun Q."/>
            <person name="Ying G."/>
            <person name="Tang D.-J."/>
            <person name="Tang H."/>
            <person name="Wu W."/>
            <person name="Hao P."/>
            <person name="Wang L."/>
            <person name="Jiang B.-L."/>
            <person name="Zeng S."/>
            <person name="Gu W.-Y."/>
            <person name="Lu G."/>
            <person name="Rong L."/>
            <person name="Tian Y."/>
            <person name="Yao Z."/>
            <person name="Fu G."/>
            <person name="Chen B."/>
            <person name="Fang R."/>
            <person name="Qiang B."/>
            <person name="Chen Z."/>
            <person name="Zhao G.-P."/>
            <person name="Tang J.-L."/>
            <person name="He C."/>
        </authorList>
    </citation>
    <scope>NUCLEOTIDE SEQUENCE [LARGE SCALE GENOMIC DNA]</scope>
    <source>
        <strain>8004</strain>
    </source>
</reference>
<name>MRAY_XANC8</name>
<keyword id="KW-0131">Cell cycle</keyword>
<keyword id="KW-0132">Cell division</keyword>
<keyword id="KW-0997">Cell inner membrane</keyword>
<keyword id="KW-1003">Cell membrane</keyword>
<keyword id="KW-0133">Cell shape</keyword>
<keyword id="KW-0961">Cell wall biogenesis/degradation</keyword>
<keyword id="KW-0460">Magnesium</keyword>
<keyword id="KW-0472">Membrane</keyword>
<keyword id="KW-0479">Metal-binding</keyword>
<keyword id="KW-0573">Peptidoglycan synthesis</keyword>
<keyword id="KW-0808">Transferase</keyword>
<keyword id="KW-0812">Transmembrane</keyword>
<keyword id="KW-1133">Transmembrane helix</keyword>
<evidence type="ECO:0000255" key="1">
    <source>
        <dbReference type="HAMAP-Rule" id="MF_00038"/>
    </source>
</evidence>
<protein>
    <recommendedName>
        <fullName evidence="1">Phospho-N-acetylmuramoyl-pentapeptide-transferase</fullName>
        <ecNumber evidence="1">2.7.8.13</ecNumber>
    </recommendedName>
    <alternativeName>
        <fullName evidence="1">UDP-MurNAc-pentapeptide phosphotransferase</fullName>
    </alternativeName>
</protein>
<comment type="function">
    <text evidence="1">Catalyzes the initial step of the lipid cycle reactions in the biosynthesis of the cell wall peptidoglycan: transfers peptidoglycan precursor phospho-MurNAc-pentapeptide from UDP-MurNAc-pentapeptide onto the lipid carrier undecaprenyl phosphate, yielding undecaprenyl-pyrophosphoryl-MurNAc-pentapeptide, known as lipid I.</text>
</comment>
<comment type="catalytic activity">
    <reaction evidence="1">
        <text>UDP-N-acetyl-alpha-D-muramoyl-L-alanyl-gamma-D-glutamyl-meso-2,6-diaminopimeloyl-D-alanyl-D-alanine + di-trans,octa-cis-undecaprenyl phosphate = di-trans,octa-cis-undecaprenyl diphospho-N-acetyl-alpha-D-muramoyl-L-alanyl-D-glutamyl-meso-2,6-diaminopimeloyl-D-alanyl-D-alanine + UMP</text>
        <dbReference type="Rhea" id="RHEA:28386"/>
        <dbReference type="ChEBI" id="CHEBI:57865"/>
        <dbReference type="ChEBI" id="CHEBI:60392"/>
        <dbReference type="ChEBI" id="CHEBI:61386"/>
        <dbReference type="ChEBI" id="CHEBI:61387"/>
        <dbReference type="EC" id="2.7.8.13"/>
    </reaction>
</comment>
<comment type="cofactor">
    <cofactor evidence="1">
        <name>Mg(2+)</name>
        <dbReference type="ChEBI" id="CHEBI:18420"/>
    </cofactor>
</comment>
<comment type="pathway">
    <text evidence="1">Cell wall biogenesis; peptidoglycan biosynthesis.</text>
</comment>
<comment type="subcellular location">
    <subcellularLocation>
        <location evidence="1">Cell inner membrane</location>
        <topology evidence="1">Multi-pass membrane protein</topology>
    </subcellularLocation>
</comment>
<comment type="similarity">
    <text evidence="1">Belongs to the glycosyltransferase 4 family. MraY subfamily.</text>
</comment>